<evidence type="ECO:0000250" key="1"/>
<evidence type="ECO:0000255" key="2"/>
<evidence type="ECO:0000305" key="3"/>
<dbReference type="EMBL" id="AAFW02000152">
    <property type="protein sequence ID" value="EDN59848.1"/>
    <property type="molecule type" value="Genomic_DNA"/>
</dbReference>
<dbReference type="HOGENOM" id="CLU_168467_0_0_1"/>
<dbReference type="Proteomes" id="UP000007060">
    <property type="component" value="Unassembled WGS sequence"/>
</dbReference>
<dbReference type="GO" id="GO:0005768">
    <property type="term" value="C:endosome"/>
    <property type="evidence" value="ECO:0007669"/>
    <property type="project" value="UniProtKB-SubCell"/>
</dbReference>
<dbReference type="InterPro" id="IPR020491">
    <property type="entry name" value="BLI1"/>
</dbReference>
<dbReference type="Pfam" id="PF17324">
    <property type="entry name" value="BLI1"/>
    <property type="match status" value="1"/>
</dbReference>
<organism>
    <name type="scientific">Saccharomyces cerevisiae (strain YJM789)</name>
    <name type="common">Baker's yeast</name>
    <dbReference type="NCBI Taxonomy" id="307796"/>
    <lineage>
        <taxon>Eukaryota</taxon>
        <taxon>Fungi</taxon>
        <taxon>Dikarya</taxon>
        <taxon>Ascomycota</taxon>
        <taxon>Saccharomycotina</taxon>
        <taxon>Saccharomycetes</taxon>
        <taxon>Saccharomycetales</taxon>
        <taxon>Saccharomycetaceae</taxon>
        <taxon>Saccharomyces</taxon>
    </lineage>
</organism>
<accession>A6ZZQ5</accession>
<sequence>MGEQNKLYYDVEKLVNSLQESFDLDCAQSVSLFTSKSRSNEAWLEELENKFKLKDDVELDDVENLRAEIDMKLNMLEDKVSYYERLYKELEEFQNEIKIKTVVNNRRQSRTPK</sequence>
<keyword id="KW-0175">Coiled coil</keyword>
<keyword id="KW-0967">Endosome</keyword>
<keyword id="KW-0813">Transport</keyword>
<proteinExistence type="inferred from homology"/>
<feature type="chain" id="PRO_0000410619" description="Biogenesis of lysosome-related organelles complex 1 subunit BLI1">
    <location>
        <begin position="1"/>
        <end position="113"/>
    </location>
</feature>
<feature type="coiled-coil region" evidence="2">
    <location>
        <begin position="57"/>
        <end position="97"/>
    </location>
</feature>
<gene>
    <name type="primary">BLI1</name>
    <name type="ORF">SCY_3315</name>
</gene>
<name>BLI1_YEAS7</name>
<reference key="1">
    <citation type="journal article" date="2007" name="Proc. Natl. Acad. Sci. U.S.A.">
        <title>Genome sequencing and comparative analysis of Saccharomyces cerevisiae strain YJM789.</title>
        <authorList>
            <person name="Wei W."/>
            <person name="McCusker J.H."/>
            <person name="Hyman R.W."/>
            <person name="Jones T."/>
            <person name="Ning Y."/>
            <person name="Cao Z."/>
            <person name="Gu Z."/>
            <person name="Bruno D."/>
            <person name="Miranda M."/>
            <person name="Nguyen M."/>
            <person name="Wilhelmy J."/>
            <person name="Komp C."/>
            <person name="Tamse R."/>
            <person name="Wang X."/>
            <person name="Jia P."/>
            <person name="Luedi P."/>
            <person name="Oefner P.J."/>
            <person name="David L."/>
            <person name="Dietrich F.S."/>
            <person name="Li Y."/>
            <person name="Davis R.W."/>
            <person name="Steinmetz L.M."/>
        </authorList>
    </citation>
    <scope>NUCLEOTIDE SEQUENCE [LARGE SCALE GENOMIC DNA]</scope>
    <source>
        <strain>YJM789</strain>
    </source>
</reference>
<comment type="function">
    <text evidence="1">Component of the biogenesis of lysosome-related organelles complex-1 (BLOC-1) involved in endosomal cargo sorting.</text>
</comment>
<comment type="subunit">
    <text evidence="1">Component of the biogenesis of lysosome-related organelles complex-1 (BLOC-1) composed of at least BLI1, BLS1, CNL1, KXD1, SNN1 and VAB2.</text>
</comment>
<comment type="subcellular location">
    <subcellularLocation>
        <location evidence="1">Endosome</location>
    </subcellularLocation>
</comment>
<comment type="similarity">
    <text evidence="3">Belongs to the BLI1 family.</text>
</comment>
<protein>
    <recommendedName>
        <fullName>Biogenesis of lysosome-related organelles complex 1 subunit BLI1</fullName>
        <shortName>BLOC-1 subunit BLI1</shortName>
    </recommendedName>
    <alternativeName>
        <fullName>BLOC-1 interactor 1</fullName>
    </alternativeName>
</protein>